<protein>
    <recommendedName>
        <fullName evidence="1">2-isopropylmalate synthase</fullName>
        <ecNumber evidence="1">2.3.3.13</ecNumber>
    </recommendedName>
    <alternativeName>
        <fullName evidence="1">Alpha-IPM synthase</fullName>
    </alternativeName>
    <alternativeName>
        <fullName evidence="1">Alpha-isopropylmalate synthase</fullName>
    </alternativeName>
</protein>
<name>LEU1_NITMU</name>
<accession>Q2YBW0</accession>
<proteinExistence type="inferred from homology"/>
<reference key="1">
    <citation type="submission" date="2005-08" db="EMBL/GenBank/DDBJ databases">
        <title>Complete sequence of chromosome 1 of Nitrosospira multiformis ATCC 25196.</title>
        <authorList>
            <person name="Copeland A."/>
            <person name="Lucas S."/>
            <person name="Lapidus A."/>
            <person name="Barry K."/>
            <person name="Detter J.C."/>
            <person name="Glavina T."/>
            <person name="Hammon N."/>
            <person name="Israni S."/>
            <person name="Pitluck S."/>
            <person name="Chain P."/>
            <person name="Malfatti S."/>
            <person name="Shin M."/>
            <person name="Vergez L."/>
            <person name="Schmutz J."/>
            <person name="Larimer F."/>
            <person name="Land M."/>
            <person name="Hauser L."/>
            <person name="Kyrpides N."/>
            <person name="Lykidis A."/>
            <person name="Richardson P."/>
        </authorList>
    </citation>
    <scope>NUCLEOTIDE SEQUENCE [LARGE SCALE GENOMIC DNA]</scope>
    <source>
        <strain>ATCC 25196 / NCIMB 11849 / C 71</strain>
    </source>
</reference>
<keyword id="KW-0028">Amino-acid biosynthesis</keyword>
<keyword id="KW-0100">Branched-chain amino acid biosynthesis</keyword>
<keyword id="KW-0963">Cytoplasm</keyword>
<keyword id="KW-0432">Leucine biosynthesis</keyword>
<keyword id="KW-0464">Manganese</keyword>
<keyword id="KW-0479">Metal-binding</keyword>
<keyword id="KW-1185">Reference proteome</keyword>
<keyword id="KW-0808">Transferase</keyword>
<evidence type="ECO:0000255" key="1">
    <source>
        <dbReference type="HAMAP-Rule" id="MF_01025"/>
    </source>
</evidence>
<dbReference type="EC" id="2.3.3.13" evidence="1"/>
<dbReference type="EMBL" id="CP000103">
    <property type="protein sequence ID" value="ABB73761.1"/>
    <property type="molecule type" value="Genomic_DNA"/>
</dbReference>
<dbReference type="RefSeq" id="WP_011379815.1">
    <property type="nucleotide sequence ID" value="NC_007614.1"/>
</dbReference>
<dbReference type="SMR" id="Q2YBW0"/>
<dbReference type="STRING" id="323848.Nmul_A0453"/>
<dbReference type="KEGG" id="nmu:Nmul_A0453"/>
<dbReference type="eggNOG" id="COG0119">
    <property type="taxonomic scope" value="Bacteria"/>
</dbReference>
<dbReference type="HOGENOM" id="CLU_022158_0_1_4"/>
<dbReference type="OrthoDB" id="9803573at2"/>
<dbReference type="UniPathway" id="UPA00048">
    <property type="reaction ID" value="UER00070"/>
</dbReference>
<dbReference type="Proteomes" id="UP000002718">
    <property type="component" value="Chromosome"/>
</dbReference>
<dbReference type="GO" id="GO:0005829">
    <property type="term" value="C:cytosol"/>
    <property type="evidence" value="ECO:0007669"/>
    <property type="project" value="TreeGrafter"/>
</dbReference>
<dbReference type="GO" id="GO:0003852">
    <property type="term" value="F:2-isopropylmalate synthase activity"/>
    <property type="evidence" value="ECO:0007669"/>
    <property type="project" value="UniProtKB-UniRule"/>
</dbReference>
<dbReference type="GO" id="GO:0003985">
    <property type="term" value="F:acetyl-CoA C-acetyltransferase activity"/>
    <property type="evidence" value="ECO:0007669"/>
    <property type="project" value="UniProtKB-UniRule"/>
</dbReference>
<dbReference type="GO" id="GO:0030145">
    <property type="term" value="F:manganese ion binding"/>
    <property type="evidence" value="ECO:0007669"/>
    <property type="project" value="UniProtKB-UniRule"/>
</dbReference>
<dbReference type="GO" id="GO:0009098">
    <property type="term" value="P:L-leucine biosynthetic process"/>
    <property type="evidence" value="ECO:0007669"/>
    <property type="project" value="UniProtKB-UniRule"/>
</dbReference>
<dbReference type="CDD" id="cd07940">
    <property type="entry name" value="DRE_TIM_IPMS"/>
    <property type="match status" value="1"/>
</dbReference>
<dbReference type="FunFam" id="1.10.238.260:FF:000001">
    <property type="entry name" value="2-isopropylmalate synthase"/>
    <property type="match status" value="1"/>
</dbReference>
<dbReference type="FunFam" id="3.20.20.70:FF:000010">
    <property type="entry name" value="2-isopropylmalate synthase"/>
    <property type="match status" value="1"/>
</dbReference>
<dbReference type="FunFam" id="3.30.160.270:FF:000003">
    <property type="entry name" value="2-isopropylmalate synthase"/>
    <property type="match status" value="1"/>
</dbReference>
<dbReference type="Gene3D" id="1.10.238.260">
    <property type="match status" value="1"/>
</dbReference>
<dbReference type="Gene3D" id="3.30.160.270">
    <property type="match status" value="1"/>
</dbReference>
<dbReference type="Gene3D" id="3.20.20.70">
    <property type="entry name" value="Aldolase class I"/>
    <property type="match status" value="1"/>
</dbReference>
<dbReference type="HAMAP" id="MF_01025">
    <property type="entry name" value="LeuA_type1"/>
    <property type="match status" value="1"/>
</dbReference>
<dbReference type="InterPro" id="IPR050073">
    <property type="entry name" value="2-IPM_HCS-like"/>
</dbReference>
<dbReference type="InterPro" id="IPR013709">
    <property type="entry name" value="2-isopropylmalate_synth_dimer"/>
</dbReference>
<dbReference type="InterPro" id="IPR002034">
    <property type="entry name" value="AIPM/Hcit_synth_CS"/>
</dbReference>
<dbReference type="InterPro" id="IPR013785">
    <property type="entry name" value="Aldolase_TIM"/>
</dbReference>
<dbReference type="InterPro" id="IPR054691">
    <property type="entry name" value="LeuA/HCS_post-cat"/>
</dbReference>
<dbReference type="InterPro" id="IPR036230">
    <property type="entry name" value="LeuA_allosteric_dom_sf"/>
</dbReference>
<dbReference type="InterPro" id="IPR005671">
    <property type="entry name" value="LeuA_bact_synth"/>
</dbReference>
<dbReference type="InterPro" id="IPR000891">
    <property type="entry name" value="PYR_CT"/>
</dbReference>
<dbReference type="NCBIfam" id="TIGR00973">
    <property type="entry name" value="leuA_bact"/>
    <property type="match status" value="1"/>
</dbReference>
<dbReference type="NCBIfam" id="NF002086">
    <property type="entry name" value="PRK00915.1-3"/>
    <property type="match status" value="1"/>
</dbReference>
<dbReference type="NCBIfam" id="NF002087">
    <property type="entry name" value="PRK00915.1-4"/>
    <property type="match status" value="1"/>
</dbReference>
<dbReference type="PANTHER" id="PTHR10277:SF9">
    <property type="entry name" value="2-ISOPROPYLMALATE SYNTHASE 1, CHLOROPLASTIC-RELATED"/>
    <property type="match status" value="1"/>
</dbReference>
<dbReference type="PANTHER" id="PTHR10277">
    <property type="entry name" value="HOMOCITRATE SYNTHASE-RELATED"/>
    <property type="match status" value="1"/>
</dbReference>
<dbReference type="Pfam" id="PF22617">
    <property type="entry name" value="HCS_D2"/>
    <property type="match status" value="1"/>
</dbReference>
<dbReference type="Pfam" id="PF00682">
    <property type="entry name" value="HMGL-like"/>
    <property type="match status" value="1"/>
</dbReference>
<dbReference type="Pfam" id="PF08502">
    <property type="entry name" value="LeuA_dimer"/>
    <property type="match status" value="1"/>
</dbReference>
<dbReference type="SMART" id="SM00917">
    <property type="entry name" value="LeuA_dimer"/>
    <property type="match status" value="1"/>
</dbReference>
<dbReference type="SUPFAM" id="SSF110921">
    <property type="entry name" value="2-isopropylmalate synthase LeuA, allosteric (dimerisation) domain"/>
    <property type="match status" value="1"/>
</dbReference>
<dbReference type="SUPFAM" id="SSF51569">
    <property type="entry name" value="Aldolase"/>
    <property type="match status" value="1"/>
</dbReference>
<dbReference type="PROSITE" id="PS00815">
    <property type="entry name" value="AIPM_HOMOCIT_SYNTH_1"/>
    <property type="match status" value="1"/>
</dbReference>
<dbReference type="PROSITE" id="PS00816">
    <property type="entry name" value="AIPM_HOMOCIT_SYNTH_2"/>
    <property type="match status" value="1"/>
</dbReference>
<dbReference type="PROSITE" id="PS50991">
    <property type="entry name" value="PYR_CT"/>
    <property type="match status" value="1"/>
</dbReference>
<gene>
    <name evidence="1" type="primary">leuA</name>
    <name type="ordered locus">Nmul_A0453</name>
</gene>
<feature type="chain" id="PRO_1000149229" description="2-isopropylmalate synthase">
    <location>
        <begin position="1"/>
        <end position="510"/>
    </location>
</feature>
<feature type="domain" description="Pyruvate carboxyltransferase" evidence="1">
    <location>
        <begin position="5"/>
        <end position="267"/>
    </location>
</feature>
<feature type="region of interest" description="Regulatory domain" evidence="1">
    <location>
        <begin position="392"/>
        <end position="510"/>
    </location>
</feature>
<feature type="binding site" evidence="1">
    <location>
        <position position="14"/>
    </location>
    <ligand>
        <name>Mn(2+)</name>
        <dbReference type="ChEBI" id="CHEBI:29035"/>
    </ligand>
</feature>
<feature type="binding site" evidence="1">
    <location>
        <position position="202"/>
    </location>
    <ligand>
        <name>Mn(2+)</name>
        <dbReference type="ChEBI" id="CHEBI:29035"/>
    </ligand>
</feature>
<feature type="binding site" evidence="1">
    <location>
        <position position="204"/>
    </location>
    <ligand>
        <name>Mn(2+)</name>
        <dbReference type="ChEBI" id="CHEBI:29035"/>
    </ligand>
</feature>
<feature type="binding site" evidence="1">
    <location>
        <position position="238"/>
    </location>
    <ligand>
        <name>Mn(2+)</name>
        <dbReference type="ChEBI" id="CHEBI:29035"/>
    </ligand>
</feature>
<comment type="function">
    <text evidence="1">Catalyzes the condensation of the acetyl group of acetyl-CoA with 3-methyl-2-oxobutanoate (2-ketoisovalerate) to form 3-carboxy-3-hydroxy-4-methylpentanoate (2-isopropylmalate).</text>
</comment>
<comment type="catalytic activity">
    <reaction evidence="1">
        <text>3-methyl-2-oxobutanoate + acetyl-CoA + H2O = (2S)-2-isopropylmalate + CoA + H(+)</text>
        <dbReference type="Rhea" id="RHEA:21524"/>
        <dbReference type="ChEBI" id="CHEBI:1178"/>
        <dbReference type="ChEBI" id="CHEBI:11851"/>
        <dbReference type="ChEBI" id="CHEBI:15377"/>
        <dbReference type="ChEBI" id="CHEBI:15378"/>
        <dbReference type="ChEBI" id="CHEBI:57287"/>
        <dbReference type="ChEBI" id="CHEBI:57288"/>
        <dbReference type="EC" id="2.3.3.13"/>
    </reaction>
</comment>
<comment type="cofactor">
    <cofactor evidence="1">
        <name>Mn(2+)</name>
        <dbReference type="ChEBI" id="CHEBI:29035"/>
    </cofactor>
</comment>
<comment type="pathway">
    <text evidence="1">Amino-acid biosynthesis; L-leucine biosynthesis; L-leucine from 3-methyl-2-oxobutanoate: step 1/4.</text>
</comment>
<comment type="subunit">
    <text evidence="1">Homodimer.</text>
</comment>
<comment type="subcellular location">
    <subcellularLocation>
        <location evidence="1">Cytoplasm</location>
    </subcellularLocation>
</comment>
<comment type="similarity">
    <text evidence="1">Belongs to the alpha-IPM synthase/homocitrate synthase family. LeuA type 1 subfamily.</text>
</comment>
<organism>
    <name type="scientific">Nitrosospira multiformis (strain ATCC 25196 / NCIMB 11849 / C 71)</name>
    <dbReference type="NCBI Taxonomy" id="323848"/>
    <lineage>
        <taxon>Bacteria</taxon>
        <taxon>Pseudomonadati</taxon>
        <taxon>Pseudomonadota</taxon>
        <taxon>Betaproteobacteria</taxon>
        <taxon>Nitrosomonadales</taxon>
        <taxon>Nitrosomonadaceae</taxon>
        <taxon>Nitrosospira</taxon>
    </lineage>
</organism>
<sequence length="510" mass="55310">MKDHLIIFDTTLRDGEQSPGASMTREEKVRIARQLERMRVDVIEAGFPAASNGDFEAVKAVAAAIKGSTICGLARAIEGDIRRAGEALRGANSARIHTFIATSPIHMEKKLRMSPDQVVEQAVKAVKFARQYTDDVEFSPEDAGRSDITFLCRVLEAVIDAGAGTVNIPDTVGYTMPQQFGELIRTLRERIPNSDKVIFSVHCHNDLGLAVANSLSAVMNGARQVECTVNGLGERAGNASLEEVVMAVRTRQDFFPCDTRIDSVHIVPASKLVSGITGFPVQPNKAIVGANAFAHESGIHQDGVLKHRETYEIMRAEDVGWGANKLLLGKHSGRNAFRSRLAELGIELESEETLNATFMRFKELADKKHDIFDEDLHALVSDDAAALQEHYKLLSLTAHSETGETPHASIVIGEEGRESRAESDGSGPVDATFRAIEKILNSGVELQLYSVNAITSGTDSQGEVTVRLQKSGRIVNGNGADTDIVVASAKAYLSALNKLHSKLERAHPQV</sequence>